<proteinExistence type="inferred from homology"/>
<dbReference type="EC" id="3.1.-.-" evidence="1"/>
<dbReference type="EMBL" id="AE014292">
    <property type="protein sequence ID" value="AAN33786.1"/>
    <property type="molecule type" value="Genomic_DNA"/>
</dbReference>
<dbReference type="EMBL" id="CP002998">
    <property type="protein sequence ID" value="AEM20063.1"/>
    <property type="molecule type" value="Genomic_DNA"/>
</dbReference>
<dbReference type="SMR" id="Q8FW65"/>
<dbReference type="KEGG" id="bms:BRA0597"/>
<dbReference type="KEGG" id="bsi:BS1330_II0592"/>
<dbReference type="PATRIC" id="fig|204722.21.peg.543"/>
<dbReference type="HOGENOM" id="CLU_098240_1_1_5"/>
<dbReference type="PhylomeDB" id="Q8FW65"/>
<dbReference type="Proteomes" id="UP000007104">
    <property type="component" value="Chromosome II"/>
</dbReference>
<dbReference type="GO" id="GO:0005829">
    <property type="term" value="C:cytosol"/>
    <property type="evidence" value="ECO:0007669"/>
    <property type="project" value="TreeGrafter"/>
</dbReference>
<dbReference type="GO" id="GO:0004518">
    <property type="term" value="F:nuclease activity"/>
    <property type="evidence" value="ECO:0007669"/>
    <property type="project" value="UniProtKB-KW"/>
</dbReference>
<dbReference type="GO" id="GO:0000967">
    <property type="term" value="P:rRNA 5'-end processing"/>
    <property type="evidence" value="ECO:0007669"/>
    <property type="project" value="UniProtKB-UniRule"/>
</dbReference>
<dbReference type="CDD" id="cd16964">
    <property type="entry name" value="YqgF"/>
    <property type="match status" value="1"/>
</dbReference>
<dbReference type="Gene3D" id="3.30.420.140">
    <property type="entry name" value="YqgF/RNase H-like domain"/>
    <property type="match status" value="1"/>
</dbReference>
<dbReference type="HAMAP" id="MF_00651">
    <property type="entry name" value="Nuclease_YqgF"/>
    <property type="match status" value="1"/>
</dbReference>
<dbReference type="InterPro" id="IPR012337">
    <property type="entry name" value="RNaseH-like_sf"/>
</dbReference>
<dbReference type="InterPro" id="IPR005227">
    <property type="entry name" value="YqgF"/>
</dbReference>
<dbReference type="InterPro" id="IPR006641">
    <property type="entry name" value="YqgF/RNaseH-like_dom"/>
</dbReference>
<dbReference type="InterPro" id="IPR037027">
    <property type="entry name" value="YqgF/RNaseH-like_dom_sf"/>
</dbReference>
<dbReference type="NCBIfam" id="TIGR00250">
    <property type="entry name" value="RNAse_H_YqgF"/>
    <property type="match status" value="1"/>
</dbReference>
<dbReference type="PANTHER" id="PTHR33317">
    <property type="entry name" value="POLYNUCLEOTIDYL TRANSFERASE, RIBONUCLEASE H-LIKE SUPERFAMILY PROTEIN"/>
    <property type="match status" value="1"/>
</dbReference>
<dbReference type="PANTHER" id="PTHR33317:SF4">
    <property type="entry name" value="POLYNUCLEOTIDYL TRANSFERASE, RIBONUCLEASE H-LIKE SUPERFAMILY PROTEIN"/>
    <property type="match status" value="1"/>
</dbReference>
<dbReference type="Pfam" id="PF03652">
    <property type="entry name" value="RuvX"/>
    <property type="match status" value="1"/>
</dbReference>
<dbReference type="SMART" id="SM00732">
    <property type="entry name" value="YqgFc"/>
    <property type="match status" value="1"/>
</dbReference>
<dbReference type="SUPFAM" id="SSF53098">
    <property type="entry name" value="Ribonuclease H-like"/>
    <property type="match status" value="1"/>
</dbReference>
<protein>
    <recommendedName>
        <fullName evidence="1">Putative pre-16S rRNA nuclease</fullName>
        <ecNumber evidence="1">3.1.-.-</ecNumber>
    </recommendedName>
</protein>
<feature type="chain" id="PRO_0000172033" description="Putative pre-16S rRNA nuclease">
    <location>
        <begin position="1"/>
        <end position="162"/>
    </location>
</feature>
<gene>
    <name type="ordered locus">BRA0597</name>
    <name type="ordered locus">BS1330_II0592</name>
</gene>
<evidence type="ECO:0000255" key="1">
    <source>
        <dbReference type="HAMAP-Rule" id="MF_00651"/>
    </source>
</evidence>
<name>YQGF_BRUSU</name>
<comment type="function">
    <text evidence="1">Could be a nuclease involved in processing of the 5'-end of pre-16S rRNA.</text>
</comment>
<comment type="subcellular location">
    <subcellularLocation>
        <location evidence="1">Cytoplasm</location>
    </subcellularLocation>
</comment>
<comment type="similarity">
    <text evidence="1">Belongs to the YqgF nuclease family.</text>
</comment>
<keyword id="KW-0963">Cytoplasm</keyword>
<keyword id="KW-0378">Hydrolase</keyword>
<keyword id="KW-0540">Nuclease</keyword>
<keyword id="KW-0690">Ribosome biogenesis</keyword>
<accession>Q8FW65</accession>
<accession>G0KCX5</accession>
<reference key="1">
    <citation type="journal article" date="2002" name="Proc. Natl. Acad. Sci. U.S.A.">
        <title>The Brucella suis genome reveals fundamental similarities between animal and plant pathogens and symbionts.</title>
        <authorList>
            <person name="Paulsen I.T."/>
            <person name="Seshadri R."/>
            <person name="Nelson K.E."/>
            <person name="Eisen J.A."/>
            <person name="Heidelberg J.F."/>
            <person name="Read T.D."/>
            <person name="Dodson R.J."/>
            <person name="Umayam L.A."/>
            <person name="Brinkac L.M."/>
            <person name="Beanan M.J."/>
            <person name="Daugherty S.C."/>
            <person name="DeBoy R.T."/>
            <person name="Durkin A.S."/>
            <person name="Kolonay J.F."/>
            <person name="Madupu R."/>
            <person name="Nelson W.C."/>
            <person name="Ayodeji B."/>
            <person name="Kraul M."/>
            <person name="Shetty J."/>
            <person name="Malek J.A."/>
            <person name="Van Aken S.E."/>
            <person name="Riedmuller S."/>
            <person name="Tettelin H."/>
            <person name="Gill S.R."/>
            <person name="White O."/>
            <person name="Salzberg S.L."/>
            <person name="Hoover D.L."/>
            <person name="Lindler L.E."/>
            <person name="Halling S.M."/>
            <person name="Boyle S.M."/>
            <person name="Fraser C.M."/>
        </authorList>
    </citation>
    <scope>NUCLEOTIDE SEQUENCE [LARGE SCALE GENOMIC DNA]</scope>
    <source>
        <strain>1330</strain>
    </source>
</reference>
<reference key="2">
    <citation type="journal article" date="2011" name="J. Bacteriol.">
        <title>Revised genome sequence of Brucella suis 1330.</title>
        <authorList>
            <person name="Tae H."/>
            <person name="Shallom S."/>
            <person name="Settlage R."/>
            <person name="Preston D."/>
            <person name="Adams L.G."/>
            <person name="Garner H.R."/>
        </authorList>
    </citation>
    <scope>NUCLEOTIDE SEQUENCE [LARGE SCALE GENOMIC DNA]</scope>
    <source>
        <strain>1330</strain>
    </source>
</reference>
<sequence>MATAEIEEIPALLKPGQTVAGLDLGTKTIGLAVSDLGLSFAHPRPVIKRVKFTIDAQVLLKALETDKVGVIVIGLPMNMDGTAGPRVQATRAFVRTMQPLTDLPFVFWDERLSTVAAERALIGMDVSRGKRADRIDSAAAAFILQGALDRLHMMRRNDYDAG</sequence>
<organism>
    <name type="scientific">Brucella suis biovar 1 (strain 1330)</name>
    <dbReference type="NCBI Taxonomy" id="204722"/>
    <lineage>
        <taxon>Bacteria</taxon>
        <taxon>Pseudomonadati</taxon>
        <taxon>Pseudomonadota</taxon>
        <taxon>Alphaproteobacteria</taxon>
        <taxon>Hyphomicrobiales</taxon>
        <taxon>Brucellaceae</taxon>
        <taxon>Brucella/Ochrobactrum group</taxon>
        <taxon>Brucella</taxon>
    </lineage>
</organism>